<sequence>MKQVVYTASPNSRQIHVWSLNVEGGLSLLQTVDVPGEVQPMVINPDGKHLYVGIRPQFSIVTYAIGKNGSLEQKSIAPLPGSPTHISTDRAGRFLFSASYSFNNLSVHPIDDQGNVKAPIQIVENLQAPHSANIDRENRQLLVPCLKEDHIRIFNMDNQGYLVESHADAITTETGAGPRHMAFHPKKQAIYCINELDSTVDVLRKWEKYRIVQSVDSLPADFSSVRWSADIHMTPDGRHLYTSERSESLISHFRVSEEGYHLTLAGHYLTETQPRGFAIDHSGHFLIASGQKSDHISVSRIDKFSGELTQLARYPVGKSPMWVTILAL</sequence>
<feature type="chain" id="PRO_0000171141" description="6-phosphogluconolactonase">
    <location>
        <begin position="1"/>
        <end position="328"/>
    </location>
</feature>
<feature type="sequence conflict" description="In Ref. 2; AAF04393." evidence="2" ref="2">
    <original>W</original>
    <variation>C</variation>
    <location>
        <position position="227"/>
    </location>
</feature>
<feature type="sequence conflict" description="In Ref. 2; AAF04393." evidence="2" ref="2">
    <original>E</original>
    <variation>G</variation>
    <location>
        <position position="258"/>
    </location>
</feature>
<feature type="sequence conflict" description="In Ref. 2; AAF04393." evidence="2" ref="2">
    <original>A</original>
    <variation>T</variation>
    <location>
        <position position="265"/>
    </location>
</feature>
<feature type="sequence conflict" description="In Ref. 2; AAF04393." evidence="2" ref="2">
    <original>QPRGFAID</original>
    <variation>NPVALPLI</variation>
    <location>
        <begin position="273"/>
        <end position="280"/>
    </location>
</feature>
<keyword id="KW-0119">Carbohydrate metabolism</keyword>
<keyword id="KW-0313">Glucose metabolism</keyword>
<keyword id="KW-0378">Hydrolase</keyword>
<keyword id="KW-1185">Reference proteome</keyword>
<name>6PGL_XENNA</name>
<organism>
    <name type="scientific">Xenorhabdus nematophila (strain ATCC 19061 / DSM 3370 / CCUG 14189 / LMG 1036 / NCIMB 9965 / AN6)</name>
    <dbReference type="NCBI Taxonomy" id="406817"/>
    <lineage>
        <taxon>Bacteria</taxon>
        <taxon>Pseudomonadati</taxon>
        <taxon>Pseudomonadota</taxon>
        <taxon>Gammaproteobacteria</taxon>
        <taxon>Enterobacterales</taxon>
        <taxon>Morganellaceae</taxon>
        <taxon>Xenorhabdus</taxon>
    </lineage>
</organism>
<accession>Q9RMP7</accession>
<accession>D3VAR4</accession>
<proteinExistence type="inferred from homology"/>
<protein>
    <recommendedName>
        <fullName evidence="1">6-phosphogluconolactonase</fullName>
        <shortName evidence="1">6-P-gluconolactonase</shortName>
        <ecNumber evidence="1">3.1.1.31</ecNumber>
    </recommendedName>
</protein>
<comment type="function">
    <text evidence="1">Catalyzes the hydrolysis of 6-phosphogluconolactone to 6-phosphogluconate.</text>
</comment>
<comment type="catalytic activity">
    <reaction evidence="1">
        <text>6-phospho-D-glucono-1,5-lactone + H2O = 6-phospho-D-gluconate + H(+)</text>
        <dbReference type="Rhea" id="RHEA:12556"/>
        <dbReference type="ChEBI" id="CHEBI:15377"/>
        <dbReference type="ChEBI" id="CHEBI:15378"/>
        <dbReference type="ChEBI" id="CHEBI:57955"/>
        <dbReference type="ChEBI" id="CHEBI:58759"/>
        <dbReference type="EC" id="3.1.1.31"/>
    </reaction>
</comment>
<comment type="pathway">
    <text evidence="1">Carbohydrate degradation; pentose phosphate pathway; D-ribulose 5-phosphate from D-glucose 6-phosphate (oxidative stage): step 2/3.</text>
</comment>
<comment type="similarity">
    <text evidence="1">Belongs to the cycloisomerase 2 family.</text>
</comment>
<reference key="1">
    <citation type="journal article" date="2011" name="PLoS ONE">
        <title>The entomopathogenic bacterial endosymbionts xenorhabdus and photorhabdus: convergent lifestyles from divergent genomes.</title>
        <authorList>
            <person name="Chaston J.M."/>
            <person name="Suen G."/>
            <person name="Tucker S.L."/>
            <person name="Andersen A.W."/>
            <person name="Bhasin A."/>
            <person name="Bode E."/>
            <person name="Bode H.B."/>
            <person name="Brachmann A.O."/>
            <person name="Cowles C.E."/>
            <person name="Cowles K.N."/>
            <person name="Darby C."/>
            <person name="de Leon L."/>
            <person name="Drace K."/>
            <person name="Du Z."/>
            <person name="Givaudan A."/>
            <person name="Herbert Tran E.E."/>
            <person name="Jewell K.A."/>
            <person name="Knack J.J."/>
            <person name="Krasomil-Osterfeld K.C."/>
            <person name="Kukor R."/>
            <person name="Lanois A."/>
            <person name="Latreille P."/>
            <person name="Leimgruber N.K."/>
            <person name="Lipke C.M."/>
            <person name="Liu R."/>
            <person name="Lu X."/>
            <person name="Martens E.C."/>
            <person name="Marri P.R."/>
            <person name="Medigue C."/>
            <person name="Menard M.L."/>
            <person name="Miller N.M."/>
            <person name="Morales-Soto N."/>
            <person name="Norton S."/>
            <person name="Ogier J.C."/>
            <person name="Orchard S.S."/>
            <person name="Park D."/>
            <person name="Park Y."/>
            <person name="Qurollo B.A."/>
            <person name="Sugar D.R."/>
            <person name="Richards G.R."/>
            <person name="Rouy Z."/>
            <person name="Slominski B."/>
            <person name="Slominski K."/>
            <person name="Snyder H."/>
            <person name="Tjaden B.C."/>
            <person name="van der Hoeven R."/>
            <person name="Welch R.D."/>
            <person name="Wheeler C."/>
            <person name="Xiang B."/>
            <person name="Barbazuk B."/>
            <person name="Gaudriault S."/>
            <person name="Goodner B."/>
            <person name="Slater S.C."/>
            <person name="Forst S."/>
            <person name="Goldman B.S."/>
            <person name="Goodrich-Blair H."/>
        </authorList>
    </citation>
    <scope>NUCLEOTIDE SEQUENCE [LARGE SCALE GENOMIC DNA]</scope>
    <source>
        <strain>ATCC 19061 / DSM 3370 / CCUG 14189 / LMG 1036 / NCIMB 9965 / AN6</strain>
    </source>
</reference>
<reference key="2">
    <citation type="journal article" date="2000" name="Appl. Environ. Microbiol.">
        <title>Inactivation of a novel gene produces a phenotypic variant cell and affects the symbiotic behavior of Xenorhabdus nematophilus.</title>
        <authorList>
            <person name="Volgyi A."/>
            <person name="Fodor A."/>
            <person name="Forst S."/>
        </authorList>
    </citation>
    <scope>NUCLEOTIDE SEQUENCE [GENOMIC DNA] OF 54-328</scope>
    <source>
        <strain>ATCC 19061 / DSM 3370 / CCUG 14189 / LMG 1036 / NCIMB 9965 / AN6</strain>
    </source>
</reference>
<dbReference type="EC" id="3.1.1.31" evidence="1"/>
<dbReference type="EMBL" id="FN667742">
    <property type="protein sequence ID" value="CBJ89500.1"/>
    <property type="molecule type" value="Genomic_DNA"/>
</dbReference>
<dbReference type="EMBL" id="AF191556">
    <property type="protein sequence ID" value="AAF04393.1"/>
    <property type="molecule type" value="Genomic_DNA"/>
</dbReference>
<dbReference type="RefSeq" id="WP_010848273.1">
    <property type="nucleotide sequence ID" value="NC_014228.1"/>
</dbReference>
<dbReference type="SMR" id="Q9RMP7"/>
<dbReference type="STRING" id="406817.XNC1_1437"/>
<dbReference type="GeneID" id="24905128"/>
<dbReference type="KEGG" id="xne:XNC1_1437"/>
<dbReference type="eggNOG" id="COG2706">
    <property type="taxonomic scope" value="Bacteria"/>
</dbReference>
<dbReference type="HOGENOM" id="CLU_038716_2_0_6"/>
<dbReference type="UniPathway" id="UPA00115">
    <property type="reaction ID" value="UER00409"/>
</dbReference>
<dbReference type="Proteomes" id="UP000008075">
    <property type="component" value="Chromosome"/>
</dbReference>
<dbReference type="GO" id="GO:0005829">
    <property type="term" value="C:cytosol"/>
    <property type="evidence" value="ECO:0007669"/>
    <property type="project" value="TreeGrafter"/>
</dbReference>
<dbReference type="GO" id="GO:0017057">
    <property type="term" value="F:6-phosphogluconolactonase activity"/>
    <property type="evidence" value="ECO:0007669"/>
    <property type="project" value="UniProtKB-UniRule"/>
</dbReference>
<dbReference type="GO" id="GO:0006006">
    <property type="term" value="P:glucose metabolic process"/>
    <property type="evidence" value="ECO:0007669"/>
    <property type="project" value="UniProtKB-KW"/>
</dbReference>
<dbReference type="GO" id="GO:0009051">
    <property type="term" value="P:pentose-phosphate shunt, oxidative branch"/>
    <property type="evidence" value="ECO:0007669"/>
    <property type="project" value="UniProtKB-UniRule"/>
</dbReference>
<dbReference type="Gene3D" id="2.130.10.10">
    <property type="entry name" value="YVTN repeat-like/Quinoprotein amine dehydrogenase"/>
    <property type="match status" value="1"/>
</dbReference>
<dbReference type="HAMAP" id="MF_01605">
    <property type="entry name" value="6P_gluconolactonase"/>
    <property type="match status" value="1"/>
</dbReference>
<dbReference type="InterPro" id="IPR022528">
    <property type="entry name" value="6-phosphogluconolactonase_YbhE"/>
</dbReference>
<dbReference type="InterPro" id="IPR050282">
    <property type="entry name" value="Cycloisomerase_2"/>
</dbReference>
<dbReference type="InterPro" id="IPR019405">
    <property type="entry name" value="Lactonase_7-beta_prop"/>
</dbReference>
<dbReference type="InterPro" id="IPR011045">
    <property type="entry name" value="N2O_reductase_N"/>
</dbReference>
<dbReference type="InterPro" id="IPR015943">
    <property type="entry name" value="WD40/YVTN_repeat-like_dom_sf"/>
</dbReference>
<dbReference type="NCBIfam" id="NF008258">
    <property type="entry name" value="PRK11028.1"/>
    <property type="match status" value="1"/>
</dbReference>
<dbReference type="PANTHER" id="PTHR30344:SF1">
    <property type="entry name" value="6-PHOSPHOGLUCONOLACTONASE"/>
    <property type="match status" value="1"/>
</dbReference>
<dbReference type="PANTHER" id="PTHR30344">
    <property type="entry name" value="6-PHOSPHOGLUCONOLACTONASE-RELATED"/>
    <property type="match status" value="1"/>
</dbReference>
<dbReference type="Pfam" id="PF10282">
    <property type="entry name" value="Lactonase"/>
    <property type="match status" value="1"/>
</dbReference>
<dbReference type="SUPFAM" id="SSF50974">
    <property type="entry name" value="Nitrous oxide reductase, N-terminal domain"/>
    <property type="match status" value="1"/>
</dbReference>
<evidence type="ECO:0000255" key="1">
    <source>
        <dbReference type="HAMAP-Rule" id="MF_01605"/>
    </source>
</evidence>
<evidence type="ECO:0000305" key="2"/>
<gene>
    <name evidence="1" type="primary">pgl</name>
    <name type="ordered locus">XNC1_1437</name>
</gene>